<organism>
    <name type="scientific">Methanocaldococcus jannaschii (strain ATCC 43067 / DSM 2661 / JAL-1 / JCM 10045 / NBRC 100440)</name>
    <name type="common">Methanococcus jannaschii</name>
    <dbReference type="NCBI Taxonomy" id="243232"/>
    <lineage>
        <taxon>Archaea</taxon>
        <taxon>Methanobacteriati</taxon>
        <taxon>Methanobacteriota</taxon>
        <taxon>Methanomada group</taxon>
        <taxon>Methanococci</taxon>
        <taxon>Methanococcales</taxon>
        <taxon>Methanocaldococcaceae</taxon>
        <taxon>Methanocaldococcus</taxon>
    </lineage>
</organism>
<proteinExistence type="inferred from homology"/>
<feature type="chain" id="PRO_0000100693" description="Uncharacterized protein MJ0066">
    <location>
        <begin position="1"/>
        <end position="480"/>
    </location>
</feature>
<feature type="domain" description="PUA" evidence="1">
    <location>
        <begin position="131"/>
        <end position="207"/>
    </location>
</feature>
<sequence length="480" mass="56371">MWEVIIMKTYIGKIHLKWCKNCNVPLLGRVCEVCGSKAEEVKLTPPGDPRLGFQYDMDFINKILEEEFGAKNVLNGKIILLNKIPGNEEAYEIIVDGEVKYLIYFDEDKEKWKVKLKLNGAKDLMEKGAYKKIIKIKNDVVEFLKNRKGSVLRPGIVEFTDDIEEKDDVIIVDENDRVVGVGLAVVSSEDIKNMEKGKVVKVRFFIKDNEDYKPGKIYDNLEEAFDLMVRANEGVIDNYERNAIGFIKNTYEKIKKPVMVAFSGGKDSLVTLILTLKALGKDIDVVFIDTGLEFEETLKNVEDVERHYGIKIIRLRGENFWEKVKEYGIPARDYRWCSEICKLEPLKKFIEENYEDDVLSFVGIRKYESFNRATKKRIHRNTYIKKQINALPIFHWSSLHVWIYLLREKAPYNKLYEKGFDRIGCFMCPAMEMGEMNKIKREFPKLWEKWENVLREYAEKHNLGEGWIKKGLWRWKHKRQ</sequence>
<reference key="1">
    <citation type="journal article" date="1996" name="Science">
        <title>Complete genome sequence of the methanogenic archaeon, Methanococcus jannaschii.</title>
        <authorList>
            <person name="Bult C.J."/>
            <person name="White O."/>
            <person name="Olsen G.J."/>
            <person name="Zhou L."/>
            <person name="Fleischmann R.D."/>
            <person name="Sutton G.G."/>
            <person name="Blake J.A."/>
            <person name="FitzGerald L.M."/>
            <person name="Clayton R.A."/>
            <person name="Gocayne J.D."/>
            <person name="Kerlavage A.R."/>
            <person name="Dougherty B.A."/>
            <person name="Tomb J.-F."/>
            <person name="Adams M.D."/>
            <person name="Reich C.I."/>
            <person name="Overbeek R."/>
            <person name="Kirkness E.F."/>
            <person name="Weinstock K.G."/>
            <person name="Merrick J.M."/>
            <person name="Glodek A."/>
            <person name="Scott J.L."/>
            <person name="Geoghagen N.S.M."/>
            <person name="Weidman J.F."/>
            <person name="Fuhrmann J.L."/>
            <person name="Nguyen D."/>
            <person name="Utterback T.R."/>
            <person name="Kelley J.M."/>
            <person name="Peterson J.D."/>
            <person name="Sadow P.W."/>
            <person name="Hanna M.C."/>
            <person name="Cotton M.D."/>
            <person name="Roberts K.M."/>
            <person name="Hurst M.A."/>
            <person name="Kaine B.P."/>
            <person name="Borodovsky M."/>
            <person name="Klenk H.-P."/>
            <person name="Fraser C.M."/>
            <person name="Smith H.O."/>
            <person name="Woese C.R."/>
            <person name="Venter J.C."/>
        </authorList>
    </citation>
    <scope>NUCLEOTIDE SEQUENCE [LARGE SCALE GENOMIC DNA]</scope>
    <source>
        <strain>ATCC 43067 / DSM 2661 / JAL-1 / JCM 10045 / NBRC 100440</strain>
    </source>
</reference>
<gene>
    <name type="ordered locus">MJ0066</name>
</gene>
<accession>Q60377</accession>
<name>Y066_METJA</name>
<evidence type="ECO:0000255" key="1">
    <source>
        <dbReference type="PROSITE-ProRule" id="PRU00161"/>
    </source>
</evidence>
<evidence type="ECO:0000305" key="2"/>
<dbReference type="EMBL" id="L77117">
    <property type="protein sequence ID" value="AAB98046.1"/>
    <property type="molecule type" value="Genomic_DNA"/>
</dbReference>
<dbReference type="PIR" id="B64308">
    <property type="entry name" value="B64308"/>
</dbReference>
<dbReference type="SMR" id="Q60377"/>
<dbReference type="FunCoup" id="Q60377">
    <property type="interactions" value="5"/>
</dbReference>
<dbReference type="STRING" id="243232.MJ_0066"/>
<dbReference type="PaxDb" id="243232-MJ_0066"/>
<dbReference type="EnsemblBacteria" id="AAB98046">
    <property type="protein sequence ID" value="AAB98046"/>
    <property type="gene ID" value="MJ_0066"/>
</dbReference>
<dbReference type="KEGG" id="mja:MJ_0066"/>
<dbReference type="eggNOG" id="arCOG00073">
    <property type="taxonomic scope" value="Archaea"/>
</dbReference>
<dbReference type="HOGENOM" id="CLU_026622_0_0_2"/>
<dbReference type="InParanoid" id="Q60377"/>
<dbReference type="PhylomeDB" id="Q60377"/>
<dbReference type="Proteomes" id="UP000000805">
    <property type="component" value="Chromosome"/>
</dbReference>
<dbReference type="GO" id="GO:0016491">
    <property type="term" value="F:oxidoreductase activity"/>
    <property type="evidence" value="ECO:0007669"/>
    <property type="project" value="UniProtKB-KW"/>
</dbReference>
<dbReference type="GO" id="GO:0003723">
    <property type="term" value="F:RNA binding"/>
    <property type="evidence" value="ECO:0007669"/>
    <property type="project" value="InterPro"/>
</dbReference>
<dbReference type="CDD" id="cd23947">
    <property type="entry name" value="PAPS_reductase-like_YbdN"/>
    <property type="match status" value="1"/>
</dbReference>
<dbReference type="CDD" id="cd21149">
    <property type="entry name" value="PUA_archaeosine_TGT"/>
    <property type="match status" value="1"/>
</dbReference>
<dbReference type="Gene3D" id="3.40.50.620">
    <property type="entry name" value="HUPs"/>
    <property type="match status" value="1"/>
</dbReference>
<dbReference type="Gene3D" id="2.30.130.10">
    <property type="entry name" value="PUA domain"/>
    <property type="match status" value="1"/>
</dbReference>
<dbReference type="InterPro" id="IPR002500">
    <property type="entry name" value="PAPS_reduct_dom"/>
</dbReference>
<dbReference type="InterPro" id="IPR002478">
    <property type="entry name" value="PUA"/>
</dbReference>
<dbReference type="InterPro" id="IPR015947">
    <property type="entry name" value="PUA-like_sf"/>
</dbReference>
<dbReference type="InterPro" id="IPR036974">
    <property type="entry name" value="PUA_sf"/>
</dbReference>
<dbReference type="InterPro" id="IPR014729">
    <property type="entry name" value="Rossmann-like_a/b/a_fold"/>
</dbReference>
<dbReference type="InterPro" id="IPR050128">
    <property type="entry name" value="Sulfate_adenylyltrnsfr_sub2"/>
</dbReference>
<dbReference type="InterPro" id="IPR004521">
    <property type="entry name" value="Uncharacterised_CHP00451"/>
</dbReference>
<dbReference type="NCBIfam" id="NF010367">
    <property type="entry name" value="PRK13795.1-2"/>
    <property type="match status" value="1"/>
</dbReference>
<dbReference type="NCBIfam" id="TIGR00451">
    <property type="entry name" value="unchar_dom_2"/>
    <property type="match status" value="1"/>
</dbReference>
<dbReference type="PANTHER" id="PTHR43196:SF2">
    <property type="entry name" value="PHOSPHOADENOSINE PHOSPHOSULFATE REDUCTASE"/>
    <property type="match status" value="1"/>
</dbReference>
<dbReference type="PANTHER" id="PTHR43196">
    <property type="entry name" value="SULFATE ADENYLYLTRANSFERASE SUBUNIT 2"/>
    <property type="match status" value="1"/>
</dbReference>
<dbReference type="Pfam" id="PF01507">
    <property type="entry name" value="PAPS_reduct"/>
    <property type="match status" value="1"/>
</dbReference>
<dbReference type="Pfam" id="PF01472">
    <property type="entry name" value="PUA"/>
    <property type="match status" value="1"/>
</dbReference>
<dbReference type="SMART" id="SM00359">
    <property type="entry name" value="PUA"/>
    <property type="match status" value="1"/>
</dbReference>
<dbReference type="SUPFAM" id="SSF52402">
    <property type="entry name" value="Adenine nucleotide alpha hydrolases-like"/>
    <property type="match status" value="1"/>
</dbReference>
<dbReference type="SUPFAM" id="SSF88697">
    <property type="entry name" value="PUA domain-like"/>
    <property type="match status" value="1"/>
</dbReference>
<dbReference type="PROSITE" id="PS50890">
    <property type="entry name" value="PUA"/>
    <property type="match status" value="1"/>
</dbReference>
<protein>
    <recommendedName>
        <fullName>Uncharacterized protein MJ0066</fullName>
    </recommendedName>
</protein>
<comment type="similarity">
    <text evidence="2">In the C-terminal section; belongs to the PAPS reductase family.</text>
</comment>
<keyword id="KW-0560">Oxidoreductase</keyword>
<keyword id="KW-1185">Reference proteome</keyword>